<keyword id="KW-0963">Cytoplasm</keyword>
<protein>
    <recommendedName>
        <fullName evidence="1">Regulator of ribonuclease activity A</fullName>
    </recommendedName>
</protein>
<organism>
    <name type="scientific">Escherichia coli O17:K52:H18 (strain UMN026 / ExPEC)</name>
    <dbReference type="NCBI Taxonomy" id="585056"/>
    <lineage>
        <taxon>Bacteria</taxon>
        <taxon>Pseudomonadati</taxon>
        <taxon>Pseudomonadota</taxon>
        <taxon>Gammaproteobacteria</taxon>
        <taxon>Enterobacterales</taxon>
        <taxon>Enterobacteriaceae</taxon>
        <taxon>Escherichia</taxon>
    </lineage>
</organism>
<name>RRAA_ECOLU</name>
<dbReference type="EMBL" id="CU928163">
    <property type="protein sequence ID" value="CAR15585.1"/>
    <property type="molecule type" value="Genomic_DNA"/>
</dbReference>
<dbReference type="RefSeq" id="WP_000872908.1">
    <property type="nucleotide sequence ID" value="NC_011751.1"/>
</dbReference>
<dbReference type="RefSeq" id="YP_002415074.1">
    <property type="nucleotide sequence ID" value="NC_011751.1"/>
</dbReference>
<dbReference type="SMR" id="B7NFM8"/>
<dbReference type="STRING" id="585056.ECUMN_4459"/>
<dbReference type="GeneID" id="93777969"/>
<dbReference type="KEGG" id="eum:ECUMN_4459"/>
<dbReference type="PATRIC" id="fig|585056.7.peg.4629"/>
<dbReference type="HOGENOM" id="CLU_072626_4_0_6"/>
<dbReference type="Proteomes" id="UP000007097">
    <property type="component" value="Chromosome"/>
</dbReference>
<dbReference type="GO" id="GO:0005829">
    <property type="term" value="C:cytosol"/>
    <property type="evidence" value="ECO:0007669"/>
    <property type="project" value="TreeGrafter"/>
</dbReference>
<dbReference type="GO" id="GO:0060698">
    <property type="term" value="F:endoribonuclease inhibitor activity"/>
    <property type="evidence" value="ECO:0007669"/>
    <property type="project" value="UniProtKB-UniRule"/>
</dbReference>
<dbReference type="GO" id="GO:0019899">
    <property type="term" value="F:enzyme binding"/>
    <property type="evidence" value="ECO:0007669"/>
    <property type="project" value="UniProtKB-UniRule"/>
</dbReference>
<dbReference type="GO" id="GO:1902369">
    <property type="term" value="P:negative regulation of RNA catabolic process"/>
    <property type="evidence" value="ECO:0007669"/>
    <property type="project" value="TreeGrafter"/>
</dbReference>
<dbReference type="CDD" id="cd16841">
    <property type="entry name" value="RraA_family"/>
    <property type="match status" value="1"/>
</dbReference>
<dbReference type="FunFam" id="3.50.30.40:FF:000001">
    <property type="entry name" value="Regulator of ribonuclease activity A"/>
    <property type="match status" value="1"/>
</dbReference>
<dbReference type="Gene3D" id="3.50.30.40">
    <property type="entry name" value="Ribonuclease E inhibitor RraA/RraA-like"/>
    <property type="match status" value="1"/>
</dbReference>
<dbReference type="HAMAP" id="MF_00471">
    <property type="entry name" value="RraA"/>
    <property type="match status" value="1"/>
</dbReference>
<dbReference type="InterPro" id="IPR010203">
    <property type="entry name" value="RraA"/>
</dbReference>
<dbReference type="InterPro" id="IPR005493">
    <property type="entry name" value="RraA/RraA-like"/>
</dbReference>
<dbReference type="InterPro" id="IPR036704">
    <property type="entry name" value="RraA/RraA-like_sf"/>
</dbReference>
<dbReference type="InterPro" id="IPR014339">
    <property type="entry name" value="RraA_gpbac"/>
</dbReference>
<dbReference type="NCBIfam" id="TIGR01935">
    <property type="entry name" value="NOT-MenG"/>
    <property type="match status" value="1"/>
</dbReference>
<dbReference type="NCBIfam" id="NF006875">
    <property type="entry name" value="PRK09372.1"/>
    <property type="match status" value="1"/>
</dbReference>
<dbReference type="NCBIfam" id="TIGR02998">
    <property type="entry name" value="RraA_entero"/>
    <property type="match status" value="1"/>
</dbReference>
<dbReference type="PANTHER" id="PTHR33254">
    <property type="entry name" value="4-HYDROXY-4-METHYL-2-OXOGLUTARATE ALDOLASE 3-RELATED"/>
    <property type="match status" value="1"/>
</dbReference>
<dbReference type="PANTHER" id="PTHR33254:SF29">
    <property type="entry name" value="REGULATOR OF RIBONUCLEASE ACTIVITY A"/>
    <property type="match status" value="1"/>
</dbReference>
<dbReference type="Pfam" id="PF03737">
    <property type="entry name" value="RraA-like"/>
    <property type="match status" value="1"/>
</dbReference>
<dbReference type="SUPFAM" id="SSF89562">
    <property type="entry name" value="RraA-like"/>
    <property type="match status" value="1"/>
</dbReference>
<proteinExistence type="inferred from homology"/>
<feature type="chain" id="PRO_1000194858" description="Regulator of ribonuclease activity A">
    <location>
        <begin position="1"/>
        <end position="161"/>
    </location>
</feature>
<gene>
    <name evidence="1" type="primary">rraA</name>
    <name type="ordered locus">ECUMN_4459</name>
</gene>
<sequence>MKYDTSELCDIYQEDVNVVEPLFSNFGGRASFGGQIITVKCFEDNGLLYDLLEQNGRGRVLVVDGGGSVRRALVDAELARLAVQNEWEGLVIYGAVRQVDDLEELDIGIQAMAAIPVGAAGEGIGESDVRVNFGGVTFFSGDHLYADNTGIILSEDPLDIE</sequence>
<evidence type="ECO:0000255" key="1">
    <source>
        <dbReference type="HAMAP-Rule" id="MF_00471"/>
    </source>
</evidence>
<accession>B7NFM8</accession>
<reference key="1">
    <citation type="journal article" date="2009" name="PLoS Genet.">
        <title>Organised genome dynamics in the Escherichia coli species results in highly diverse adaptive paths.</title>
        <authorList>
            <person name="Touchon M."/>
            <person name="Hoede C."/>
            <person name="Tenaillon O."/>
            <person name="Barbe V."/>
            <person name="Baeriswyl S."/>
            <person name="Bidet P."/>
            <person name="Bingen E."/>
            <person name="Bonacorsi S."/>
            <person name="Bouchier C."/>
            <person name="Bouvet O."/>
            <person name="Calteau A."/>
            <person name="Chiapello H."/>
            <person name="Clermont O."/>
            <person name="Cruveiller S."/>
            <person name="Danchin A."/>
            <person name="Diard M."/>
            <person name="Dossat C."/>
            <person name="Karoui M.E."/>
            <person name="Frapy E."/>
            <person name="Garry L."/>
            <person name="Ghigo J.M."/>
            <person name="Gilles A.M."/>
            <person name="Johnson J."/>
            <person name="Le Bouguenec C."/>
            <person name="Lescat M."/>
            <person name="Mangenot S."/>
            <person name="Martinez-Jehanne V."/>
            <person name="Matic I."/>
            <person name="Nassif X."/>
            <person name="Oztas S."/>
            <person name="Petit M.A."/>
            <person name="Pichon C."/>
            <person name="Rouy Z."/>
            <person name="Ruf C.S."/>
            <person name="Schneider D."/>
            <person name="Tourret J."/>
            <person name="Vacherie B."/>
            <person name="Vallenet D."/>
            <person name="Medigue C."/>
            <person name="Rocha E.P.C."/>
            <person name="Denamur E."/>
        </authorList>
    </citation>
    <scope>NUCLEOTIDE SEQUENCE [LARGE SCALE GENOMIC DNA]</scope>
    <source>
        <strain>UMN026 / ExPEC</strain>
    </source>
</reference>
<comment type="function">
    <text evidence="1">Globally modulates RNA abundance by binding to RNase E (Rne) and regulating its endonucleolytic activity. Can modulate Rne action in a substrate-dependent manner by altering the composition of the degradosome. Modulates RNA-binding and helicase activities of the degradosome.</text>
</comment>
<comment type="subunit">
    <text evidence="1">Homotrimer. Binds to both RNA-binding sites in the C-terminal region of Rne and to RhlB.</text>
</comment>
<comment type="subcellular location">
    <subcellularLocation>
        <location evidence="1">Cytoplasm</location>
    </subcellularLocation>
</comment>
<comment type="similarity">
    <text evidence="1">Belongs to the RraA family.</text>
</comment>